<accession>C1EZA3</accession>
<keyword id="KW-0067">ATP-binding</keyword>
<keyword id="KW-0963">Cytoplasm</keyword>
<keyword id="KW-0324">Glycolysis</keyword>
<keyword id="KW-0418">Kinase</keyword>
<keyword id="KW-0547">Nucleotide-binding</keyword>
<keyword id="KW-0597">Phosphoprotein</keyword>
<keyword id="KW-0808">Transferase</keyword>
<feature type="chain" id="PRO_1000192796" description="Phosphoglycerate kinase">
    <location>
        <begin position="1"/>
        <end position="394"/>
    </location>
</feature>
<feature type="binding site" evidence="1">
    <location>
        <begin position="21"/>
        <end position="23"/>
    </location>
    <ligand>
        <name>substrate</name>
    </ligand>
</feature>
<feature type="binding site" evidence="1">
    <location>
        <position position="36"/>
    </location>
    <ligand>
        <name>substrate</name>
    </ligand>
</feature>
<feature type="binding site" evidence="1">
    <location>
        <begin position="59"/>
        <end position="62"/>
    </location>
    <ligand>
        <name>substrate</name>
    </ligand>
</feature>
<feature type="binding site" evidence="1">
    <location>
        <position position="118"/>
    </location>
    <ligand>
        <name>substrate</name>
    </ligand>
</feature>
<feature type="binding site" evidence="1">
    <location>
        <position position="151"/>
    </location>
    <ligand>
        <name>substrate</name>
    </ligand>
</feature>
<feature type="binding site" evidence="1">
    <location>
        <position position="201"/>
    </location>
    <ligand>
        <name>ATP</name>
        <dbReference type="ChEBI" id="CHEBI:30616"/>
    </ligand>
</feature>
<feature type="binding site" evidence="1">
    <location>
        <position position="292"/>
    </location>
    <ligand>
        <name>ATP</name>
        <dbReference type="ChEBI" id="CHEBI:30616"/>
    </ligand>
</feature>
<feature type="binding site" evidence="1">
    <location>
        <position position="323"/>
    </location>
    <ligand>
        <name>ATP</name>
        <dbReference type="ChEBI" id="CHEBI:30616"/>
    </ligand>
</feature>
<feature type="binding site" evidence="1">
    <location>
        <begin position="350"/>
        <end position="353"/>
    </location>
    <ligand>
        <name>ATP</name>
        <dbReference type="ChEBI" id="CHEBI:30616"/>
    </ligand>
</feature>
<feature type="modified residue" description="Phosphoserine" evidence="1">
    <location>
        <position position="183"/>
    </location>
</feature>
<feature type="modified residue" description="Phosphothreonine" evidence="1">
    <location>
        <position position="299"/>
    </location>
</feature>
<protein>
    <recommendedName>
        <fullName evidence="1">Phosphoglycerate kinase</fullName>
        <ecNumber evidence="1">2.7.2.3</ecNumber>
    </recommendedName>
</protein>
<organism>
    <name type="scientific">Bacillus cereus (strain 03BB102)</name>
    <dbReference type="NCBI Taxonomy" id="572264"/>
    <lineage>
        <taxon>Bacteria</taxon>
        <taxon>Bacillati</taxon>
        <taxon>Bacillota</taxon>
        <taxon>Bacilli</taxon>
        <taxon>Bacillales</taxon>
        <taxon>Bacillaceae</taxon>
        <taxon>Bacillus</taxon>
        <taxon>Bacillus cereus group</taxon>
    </lineage>
</organism>
<gene>
    <name evidence="1" type="primary">pgk</name>
    <name type="ordered locus">BCA_5249</name>
</gene>
<proteinExistence type="inferred from homology"/>
<dbReference type="EC" id="2.7.2.3" evidence="1"/>
<dbReference type="EMBL" id="CP001407">
    <property type="protein sequence ID" value="ACO26681.1"/>
    <property type="molecule type" value="Genomic_DNA"/>
</dbReference>
<dbReference type="RefSeq" id="WP_001036338.1">
    <property type="nucleotide sequence ID" value="NZ_CP009318.1"/>
</dbReference>
<dbReference type="KEGG" id="bcx:BCA_5249"/>
<dbReference type="PATRIC" id="fig|572264.18.peg.5172"/>
<dbReference type="UniPathway" id="UPA00109">
    <property type="reaction ID" value="UER00185"/>
</dbReference>
<dbReference type="Proteomes" id="UP000002210">
    <property type="component" value="Chromosome"/>
</dbReference>
<dbReference type="GO" id="GO:0005829">
    <property type="term" value="C:cytosol"/>
    <property type="evidence" value="ECO:0007669"/>
    <property type="project" value="TreeGrafter"/>
</dbReference>
<dbReference type="GO" id="GO:0043531">
    <property type="term" value="F:ADP binding"/>
    <property type="evidence" value="ECO:0007669"/>
    <property type="project" value="TreeGrafter"/>
</dbReference>
<dbReference type="GO" id="GO:0005524">
    <property type="term" value="F:ATP binding"/>
    <property type="evidence" value="ECO:0007669"/>
    <property type="project" value="UniProtKB-KW"/>
</dbReference>
<dbReference type="GO" id="GO:0004618">
    <property type="term" value="F:phosphoglycerate kinase activity"/>
    <property type="evidence" value="ECO:0007669"/>
    <property type="project" value="UniProtKB-UniRule"/>
</dbReference>
<dbReference type="GO" id="GO:0006094">
    <property type="term" value="P:gluconeogenesis"/>
    <property type="evidence" value="ECO:0007669"/>
    <property type="project" value="TreeGrafter"/>
</dbReference>
<dbReference type="GO" id="GO:0006096">
    <property type="term" value="P:glycolytic process"/>
    <property type="evidence" value="ECO:0007669"/>
    <property type="project" value="UniProtKB-UniRule"/>
</dbReference>
<dbReference type="CDD" id="cd00318">
    <property type="entry name" value="Phosphoglycerate_kinase"/>
    <property type="match status" value="1"/>
</dbReference>
<dbReference type="FunFam" id="3.40.50.1260:FF:000001">
    <property type="entry name" value="Phosphoglycerate kinase"/>
    <property type="match status" value="1"/>
</dbReference>
<dbReference type="FunFam" id="3.40.50.1260:FF:000002">
    <property type="entry name" value="Phosphoglycerate kinase"/>
    <property type="match status" value="1"/>
</dbReference>
<dbReference type="Gene3D" id="3.40.50.1260">
    <property type="entry name" value="Phosphoglycerate kinase, N-terminal domain"/>
    <property type="match status" value="2"/>
</dbReference>
<dbReference type="HAMAP" id="MF_00145">
    <property type="entry name" value="Phosphoglyc_kinase"/>
    <property type="match status" value="1"/>
</dbReference>
<dbReference type="InterPro" id="IPR001576">
    <property type="entry name" value="Phosphoglycerate_kinase"/>
</dbReference>
<dbReference type="InterPro" id="IPR015911">
    <property type="entry name" value="Phosphoglycerate_kinase_CS"/>
</dbReference>
<dbReference type="InterPro" id="IPR015824">
    <property type="entry name" value="Phosphoglycerate_kinase_N"/>
</dbReference>
<dbReference type="InterPro" id="IPR036043">
    <property type="entry name" value="Phosphoglycerate_kinase_sf"/>
</dbReference>
<dbReference type="PANTHER" id="PTHR11406">
    <property type="entry name" value="PHOSPHOGLYCERATE KINASE"/>
    <property type="match status" value="1"/>
</dbReference>
<dbReference type="PANTHER" id="PTHR11406:SF23">
    <property type="entry name" value="PHOSPHOGLYCERATE KINASE 1, CHLOROPLASTIC-RELATED"/>
    <property type="match status" value="1"/>
</dbReference>
<dbReference type="Pfam" id="PF00162">
    <property type="entry name" value="PGK"/>
    <property type="match status" value="1"/>
</dbReference>
<dbReference type="PIRSF" id="PIRSF000724">
    <property type="entry name" value="Pgk"/>
    <property type="match status" value="1"/>
</dbReference>
<dbReference type="PRINTS" id="PR00477">
    <property type="entry name" value="PHGLYCKINASE"/>
</dbReference>
<dbReference type="SUPFAM" id="SSF53748">
    <property type="entry name" value="Phosphoglycerate kinase"/>
    <property type="match status" value="1"/>
</dbReference>
<dbReference type="PROSITE" id="PS00111">
    <property type="entry name" value="PGLYCERATE_KINASE"/>
    <property type="match status" value="1"/>
</dbReference>
<comment type="catalytic activity">
    <reaction evidence="1">
        <text>(2R)-3-phosphoglycerate + ATP = (2R)-3-phospho-glyceroyl phosphate + ADP</text>
        <dbReference type="Rhea" id="RHEA:14801"/>
        <dbReference type="ChEBI" id="CHEBI:30616"/>
        <dbReference type="ChEBI" id="CHEBI:57604"/>
        <dbReference type="ChEBI" id="CHEBI:58272"/>
        <dbReference type="ChEBI" id="CHEBI:456216"/>
        <dbReference type="EC" id="2.7.2.3"/>
    </reaction>
</comment>
<comment type="pathway">
    <text evidence="1">Carbohydrate degradation; glycolysis; pyruvate from D-glyceraldehyde 3-phosphate: step 2/5.</text>
</comment>
<comment type="subunit">
    <text evidence="1">Monomer.</text>
</comment>
<comment type="subcellular location">
    <subcellularLocation>
        <location evidence="1">Cytoplasm</location>
    </subcellularLocation>
</comment>
<comment type="similarity">
    <text evidence="1">Belongs to the phosphoglycerate kinase family.</text>
</comment>
<sequence>MNKKSIRDVDLKGKRVFCRVDFNVPMKEGKITDETRIRAALPTIQYLVEQGAKVILASHLGRPKGQAVEELRLTPVAARLGELLGKDVKKADEAFGPVAQEMVAAMNEGDVLVLENVRFYAGEEKNDAELAKEFAALADIFVNDAFGAAHRAHASTAGIADYLPAVSGLLMEKELEVLGKALSNPERPFTAIIGGAKVKDKIGVIRHLLDKVDNLIIGGGLAYTFVKALGHEIGLSLCEDDKIELAKEFMQLAKEKGVNFYMPVDVVITEEFSETATTKIVGIDSIPSNWEGVDIGPKTREIYADVIKNSKLVVWNGPMGVFEMTPFAEGTKAVGQALADAEGTYSVIGGGDSAAAVEKFGMADKMSHISTGGGASLEFMEGKELPGVVCLNDK</sequence>
<evidence type="ECO:0000255" key="1">
    <source>
        <dbReference type="HAMAP-Rule" id="MF_00145"/>
    </source>
</evidence>
<name>PGK_BACC3</name>
<reference key="1">
    <citation type="submission" date="2009-02" db="EMBL/GenBank/DDBJ databases">
        <title>Genome sequence of Bacillus cereus 03BB102.</title>
        <authorList>
            <person name="Dodson R.J."/>
            <person name="Jackson P."/>
            <person name="Munk A.C."/>
            <person name="Brettin T."/>
            <person name="Bruce D."/>
            <person name="Detter C."/>
            <person name="Tapia R."/>
            <person name="Han C."/>
            <person name="Sutton G."/>
            <person name="Sims D."/>
        </authorList>
    </citation>
    <scope>NUCLEOTIDE SEQUENCE [LARGE SCALE GENOMIC DNA]</scope>
    <source>
        <strain>03BB102</strain>
    </source>
</reference>